<feature type="initiator methionine" description="Removed" evidence="2">
    <location>
        <position position="1"/>
    </location>
</feature>
<feature type="chain" id="PRO_0000042601" description="Transcription initiation factor IIA subunit 1">
    <location>
        <begin position="2"/>
        <end position="377"/>
    </location>
</feature>
<feature type="chain" id="PRO_0000042602" description="Transcription initiation factor IIA alpha chain">
    <location>
        <begin position="2"/>
        <end position="275"/>
    </location>
</feature>
<feature type="chain" id="PRO_0000042603" description="Transcription initiation factor IIA beta chain">
    <location>
        <begin position="276"/>
        <end position="377"/>
    </location>
</feature>
<feature type="region of interest" description="Disordered" evidence="3">
    <location>
        <begin position="69"/>
        <end position="107"/>
    </location>
</feature>
<feature type="region of interest" description="Disordered" evidence="3">
    <location>
        <begin position="248"/>
        <end position="330"/>
    </location>
</feature>
<feature type="compositionally biased region" description="Low complexity" evidence="3">
    <location>
        <begin position="69"/>
        <end position="79"/>
    </location>
</feature>
<feature type="compositionally biased region" description="Low complexity" evidence="3">
    <location>
        <begin position="89"/>
        <end position="105"/>
    </location>
</feature>
<feature type="compositionally biased region" description="Low complexity" evidence="3">
    <location>
        <begin position="248"/>
        <end position="280"/>
    </location>
</feature>
<feature type="compositionally biased region" description="Acidic residues" evidence="3">
    <location>
        <begin position="281"/>
        <end position="330"/>
    </location>
</feature>
<feature type="binding site" evidence="2">
    <location>
        <position position="344"/>
    </location>
    <ligand>
        <name>DNA</name>
        <dbReference type="ChEBI" id="CHEBI:16991"/>
    </ligand>
</feature>
<feature type="binding site" evidence="2">
    <location>
        <position position="345"/>
    </location>
    <ligand>
        <name>DNA</name>
        <dbReference type="ChEBI" id="CHEBI:16991"/>
    </ligand>
</feature>
<feature type="site" description="Cleavage; by TASP1">
    <location>
        <begin position="275"/>
        <end position="276"/>
    </location>
</feature>
<feature type="modified residue" description="N-acetylalanine" evidence="2">
    <location>
        <position position="2"/>
    </location>
</feature>
<feature type="modified residue" description="Phosphoserine; by TAF1" evidence="2">
    <location>
        <position position="281"/>
    </location>
</feature>
<feature type="modified residue" description="Phosphoserine; by TAF1" evidence="2">
    <location>
        <position position="282"/>
    </location>
</feature>
<feature type="modified residue" description="Phosphoserine" evidence="5">
    <location>
        <position position="317"/>
    </location>
</feature>
<feature type="modified residue" description="Phosphoserine" evidence="5">
    <location>
        <position position="322"/>
    </location>
</feature>
<organism>
    <name type="scientific">Rattus norvegicus</name>
    <name type="common">Rat</name>
    <dbReference type="NCBI Taxonomy" id="10116"/>
    <lineage>
        <taxon>Eukaryota</taxon>
        <taxon>Metazoa</taxon>
        <taxon>Chordata</taxon>
        <taxon>Craniata</taxon>
        <taxon>Vertebrata</taxon>
        <taxon>Euteleostomi</taxon>
        <taxon>Mammalia</taxon>
        <taxon>Eutheria</taxon>
        <taxon>Euarchontoglires</taxon>
        <taxon>Glires</taxon>
        <taxon>Rodentia</taxon>
        <taxon>Myomorpha</taxon>
        <taxon>Muroidea</taxon>
        <taxon>Muridae</taxon>
        <taxon>Murinae</taxon>
        <taxon>Rattus</taxon>
    </lineage>
</organism>
<proteinExistence type="evidence at protein level"/>
<reference key="1">
    <citation type="journal article" date="2001" name="Biol. Reprod.">
        <title>TFIIAalpha/beta-like factor is encoded by a germ cell-specific gene whose expression is up-regulated with other general transcription factors during spermatogenesis in the mouse.</title>
        <authorList>
            <person name="Han S."/>
            <person name="Zhou L."/>
            <person name="Upadhyaya A.B."/>
            <person name="Lee S.H."/>
            <person name="Parker K.L."/>
            <person name="DeJong J."/>
        </authorList>
    </citation>
    <scope>NUCLEOTIDE SEQUENCE [MRNA]</scope>
    <source>
        <strain>Sprague-Dawley</strain>
        <tissue>Testis</tissue>
    </source>
</reference>
<reference key="2">
    <citation type="journal article" date="2012" name="Nat. Commun.">
        <title>Quantitative maps of protein phosphorylation sites across 14 different rat organs and tissues.</title>
        <authorList>
            <person name="Lundby A."/>
            <person name="Secher A."/>
            <person name="Lage K."/>
            <person name="Nordsborg N.B."/>
            <person name="Dmytriyev A."/>
            <person name="Lundby C."/>
            <person name="Olsen J.V."/>
        </authorList>
    </citation>
    <scope>PHOSPHORYLATION [LARGE SCALE ANALYSIS] AT SER-317 AND SER-322</scope>
    <scope>IDENTIFICATION BY MASS SPECTROMETRY [LARGE SCALE ANALYSIS]</scope>
</reference>
<evidence type="ECO:0000250" key="1"/>
<evidence type="ECO:0000250" key="2">
    <source>
        <dbReference type="UniProtKB" id="P52655"/>
    </source>
</evidence>
<evidence type="ECO:0000256" key="3">
    <source>
        <dbReference type="SAM" id="MobiDB-lite"/>
    </source>
</evidence>
<evidence type="ECO:0000305" key="4"/>
<evidence type="ECO:0007744" key="5">
    <source>
    </source>
</evidence>
<dbReference type="EMBL" id="AF000943">
    <property type="protein sequence ID" value="AAB58716.1"/>
    <property type="molecule type" value="mRNA"/>
</dbReference>
<dbReference type="RefSeq" id="NP_071544.1">
    <property type="nucleotide sequence ID" value="NM_022208.2"/>
</dbReference>
<dbReference type="SMR" id="O08949"/>
<dbReference type="FunCoup" id="O08949">
    <property type="interactions" value="3941"/>
</dbReference>
<dbReference type="STRING" id="10116.ENSRNOP00000005873"/>
<dbReference type="GlyGen" id="O08949">
    <property type="glycosylation" value="1 site"/>
</dbReference>
<dbReference type="iPTMnet" id="O08949"/>
<dbReference type="PhosphoSitePlus" id="O08949"/>
<dbReference type="jPOST" id="O08949"/>
<dbReference type="PaxDb" id="10116-ENSRNOP00000005873"/>
<dbReference type="Ensembl" id="ENSRNOT00000005873.4">
    <property type="protein sequence ID" value="ENSRNOP00000005873.1"/>
    <property type="gene ID" value="ENSRNOG00000004300.6"/>
</dbReference>
<dbReference type="GeneID" id="83830"/>
<dbReference type="KEGG" id="rno:83830"/>
<dbReference type="UCSC" id="RGD:69246">
    <property type="organism name" value="rat"/>
</dbReference>
<dbReference type="AGR" id="RGD:69246"/>
<dbReference type="CTD" id="2957"/>
<dbReference type="RGD" id="69246">
    <property type="gene designation" value="Gtf2a1"/>
</dbReference>
<dbReference type="eggNOG" id="KOG2652">
    <property type="taxonomic scope" value="Eukaryota"/>
</dbReference>
<dbReference type="GeneTree" id="ENSGT00940000156726"/>
<dbReference type="HOGENOM" id="CLU_030027_5_0_1"/>
<dbReference type="InParanoid" id="O08949"/>
<dbReference type="OMA" id="EVCDASQ"/>
<dbReference type="OrthoDB" id="6275927at2759"/>
<dbReference type="PhylomeDB" id="O08949"/>
<dbReference type="TreeFam" id="TF350445"/>
<dbReference type="Reactome" id="R-RNO-674695">
    <property type="pathway name" value="RNA Polymerase II Pre-transcription Events"/>
</dbReference>
<dbReference type="Reactome" id="R-RNO-6807505">
    <property type="pathway name" value="RNA polymerase II transcribes snRNA genes"/>
</dbReference>
<dbReference type="Reactome" id="R-RNO-73776">
    <property type="pathway name" value="RNA Polymerase II Promoter Escape"/>
</dbReference>
<dbReference type="Reactome" id="R-RNO-73779">
    <property type="pathway name" value="RNA Polymerase II Transcription Pre-Initiation And Promoter Opening"/>
</dbReference>
<dbReference type="Reactome" id="R-RNO-75953">
    <property type="pathway name" value="RNA Polymerase II Transcription Initiation"/>
</dbReference>
<dbReference type="Reactome" id="R-RNO-76042">
    <property type="pathway name" value="RNA Polymerase II Transcription Initiation And Promoter Clearance"/>
</dbReference>
<dbReference type="Reactome" id="R-RNO-9018519">
    <property type="pathway name" value="Estrogen-dependent gene expression"/>
</dbReference>
<dbReference type="PRO" id="PR:O08949"/>
<dbReference type="Proteomes" id="UP000002494">
    <property type="component" value="Chromosome 6"/>
</dbReference>
<dbReference type="Bgee" id="ENSRNOG00000004300">
    <property type="expression patterns" value="Expressed in Ammon's horn and 20 other cell types or tissues"/>
</dbReference>
<dbReference type="GO" id="GO:0005737">
    <property type="term" value="C:cytoplasm"/>
    <property type="evidence" value="ECO:0000266"/>
    <property type="project" value="RGD"/>
</dbReference>
<dbReference type="GO" id="GO:0005634">
    <property type="term" value="C:nucleus"/>
    <property type="evidence" value="ECO:0000266"/>
    <property type="project" value="RGD"/>
</dbReference>
<dbReference type="GO" id="GO:0005672">
    <property type="term" value="C:transcription factor TFIIA complex"/>
    <property type="evidence" value="ECO:0000266"/>
    <property type="project" value="RGD"/>
</dbReference>
<dbReference type="GO" id="GO:0005669">
    <property type="term" value="C:transcription factor TFIID complex"/>
    <property type="evidence" value="ECO:0000266"/>
    <property type="project" value="RGD"/>
</dbReference>
<dbReference type="GO" id="GO:0097550">
    <property type="term" value="C:transcription preinitiation complex"/>
    <property type="evidence" value="ECO:0000266"/>
    <property type="project" value="RGD"/>
</dbReference>
<dbReference type="GO" id="GO:0003677">
    <property type="term" value="F:DNA binding"/>
    <property type="evidence" value="ECO:0000266"/>
    <property type="project" value="RGD"/>
</dbReference>
<dbReference type="GO" id="GO:0046982">
    <property type="term" value="F:protein heterodimerization activity"/>
    <property type="evidence" value="ECO:0000266"/>
    <property type="project" value="RGD"/>
</dbReference>
<dbReference type="GO" id="GO:0000979">
    <property type="term" value="F:RNA polymerase II core promoter sequence-specific DNA binding"/>
    <property type="evidence" value="ECO:0000266"/>
    <property type="project" value="RGD"/>
</dbReference>
<dbReference type="GO" id="GO:0016251">
    <property type="term" value="F:RNA polymerase II general transcription initiation factor activity"/>
    <property type="evidence" value="ECO:0000266"/>
    <property type="project" value="RGD"/>
</dbReference>
<dbReference type="GO" id="GO:0001091">
    <property type="term" value="F:RNA polymerase II general transcription initiation factor binding"/>
    <property type="evidence" value="ECO:0000266"/>
    <property type="project" value="RGD"/>
</dbReference>
<dbReference type="GO" id="GO:0061629">
    <property type="term" value="F:RNA polymerase II-specific DNA-binding transcription factor binding"/>
    <property type="evidence" value="ECO:0000266"/>
    <property type="project" value="RGD"/>
</dbReference>
<dbReference type="GO" id="GO:0017025">
    <property type="term" value="F:TBP-class protein binding"/>
    <property type="evidence" value="ECO:0000266"/>
    <property type="project" value="RGD"/>
</dbReference>
<dbReference type="GO" id="GO:0045944">
    <property type="term" value="P:positive regulation of transcription by RNA polymerase II"/>
    <property type="evidence" value="ECO:0000266"/>
    <property type="project" value="RGD"/>
</dbReference>
<dbReference type="GO" id="GO:0060261">
    <property type="term" value="P:positive regulation of transcription initiation by RNA polymerase II"/>
    <property type="evidence" value="ECO:0000266"/>
    <property type="project" value="RGD"/>
</dbReference>
<dbReference type="GO" id="GO:0006366">
    <property type="term" value="P:transcription by RNA polymerase II"/>
    <property type="evidence" value="ECO:0000266"/>
    <property type="project" value="RGD"/>
</dbReference>
<dbReference type="GO" id="GO:0006367">
    <property type="term" value="P:transcription initiation at RNA polymerase II promoter"/>
    <property type="evidence" value="ECO:0007669"/>
    <property type="project" value="InterPro"/>
</dbReference>
<dbReference type="CDD" id="cd07976">
    <property type="entry name" value="TFIIA_alpha_beta_like"/>
    <property type="match status" value="2"/>
</dbReference>
<dbReference type="FunFam" id="1.10.287.100:FF:000001">
    <property type="entry name" value="Transcription initiation factor IIA subunit"/>
    <property type="match status" value="1"/>
</dbReference>
<dbReference type="FunFam" id="2.30.18.10:FF:000002">
    <property type="entry name" value="Transcription initiation factor IIA subunit 1"/>
    <property type="match status" value="1"/>
</dbReference>
<dbReference type="Gene3D" id="1.10.287.100">
    <property type="match status" value="1"/>
</dbReference>
<dbReference type="Gene3D" id="2.30.18.10">
    <property type="entry name" value="Transcription factor IIA (TFIIA), beta-barrel domain"/>
    <property type="match status" value="1"/>
</dbReference>
<dbReference type="InterPro" id="IPR004855">
    <property type="entry name" value="TFIIA_asu/bsu"/>
</dbReference>
<dbReference type="InterPro" id="IPR009088">
    <property type="entry name" value="TFIIA_b-brl"/>
</dbReference>
<dbReference type="PANTHER" id="PTHR12694">
    <property type="entry name" value="TRANSCRIPTION INITIATION FACTOR IIA SUBUNIT 1"/>
    <property type="match status" value="1"/>
</dbReference>
<dbReference type="PANTHER" id="PTHR12694:SF7">
    <property type="entry name" value="TRANSCRIPTION INITIATION FACTOR IIA SUBUNIT 1"/>
    <property type="match status" value="1"/>
</dbReference>
<dbReference type="Pfam" id="PF03153">
    <property type="entry name" value="TFIIA"/>
    <property type="match status" value="2"/>
</dbReference>
<dbReference type="SMART" id="SM01371">
    <property type="entry name" value="TFIIA"/>
    <property type="match status" value="1"/>
</dbReference>
<dbReference type="SUPFAM" id="SSF47396">
    <property type="entry name" value="Transcription factor IIA (TFIIA), alpha-helical domain"/>
    <property type="match status" value="1"/>
</dbReference>
<dbReference type="SUPFAM" id="SSF50784">
    <property type="entry name" value="Transcription factor IIA (TFIIA), beta-barrel domain"/>
    <property type="match status" value="1"/>
</dbReference>
<accession>O08949</accession>
<gene>
    <name type="primary">Gtf2a1</name>
</gene>
<protein>
    <recommendedName>
        <fullName>Transcription initiation factor IIA subunit 1</fullName>
    </recommendedName>
    <alternativeName>
        <fullName>General transcription factor IIA subunit 1</fullName>
    </alternativeName>
    <component>
        <recommendedName>
            <fullName>Transcription initiation factor IIA alpha chain</fullName>
        </recommendedName>
        <alternativeName>
            <fullName>TFIIA p35 subunit</fullName>
        </alternativeName>
    </component>
    <component>
        <recommendedName>
            <fullName>Transcription initiation factor IIA beta chain</fullName>
        </recommendedName>
        <alternativeName>
            <fullName>TFIIA p19 subunit</fullName>
        </alternativeName>
    </component>
</protein>
<name>TF2AA_RAT</name>
<comment type="function">
    <text evidence="1">TFIIA is a component of the transcription machinery of RNA polymerase II and plays an important role in transcriptional activation. TFIIA in a complex with TBP mediates transcriptional activity (By similarity).</text>
</comment>
<comment type="subunit">
    <text evidence="2">TFIIA is a heterodimer of the large unprocessed subunit 1 and a small subunit gamma. It was originally believed to be a heterotrimer of an alpha (p35), a beta (p19) and a gamma subunit (p12). TFIIA forms a complex with TBP. Part of TBP-based Pol II pre-initiation complex (PIC), in which Pol II core assembles with general transcription factors and other specific initiation factors including GTF2E1, GTF2E2, GTF2F1, GTF2F2, TCEA1, ERCC2, ERCC3, GTF2H2, GTF2H3, GTF2H4, GTF2H5, GTF2A1, GTF2A2, GTF2B and TBP; this large multi-subunit PIC complex mediates DNA unwinding and targets Pol II core to the transcription start site where the first phosphodiester bond forms.</text>
</comment>
<comment type="subcellular location">
    <subcellularLocation>
        <location evidence="1">Nucleus</location>
    </subcellularLocation>
</comment>
<comment type="PTM">
    <text evidence="1">The alpha and beta subunits are postranslationally produced from the precursor formby TASP1. The cleavage promotes proteasomal degradation (By similarity).</text>
</comment>
<comment type="similarity">
    <text evidence="4">Belongs to the TFIIA subunit 1 family.</text>
</comment>
<sequence>MANSANTNTVPKLYRSVIEDVINDVRDIFLDDGVDEQVLMELKTLWENKLMQSRAVDGFHSEEQQLLLQVQQQHQPQQQQHHHHHHHQQAQPQQTVPQQAQTQQVLIPASQQATAPQVIVPDSKLIQHMNASSITSAAATAATLALPAGVTPVQQILTNSGQLLQVVRAANGAQYIFQPQQSVVLQQQVIPQMQPGGVQAPVIQQVLAPLPGGISPQTGVIIQPQQILFTGNKTQVIPTTVAAPTPAQAQIPAAGQQQPQAQPAQQQAPLVLQVDGTGDTSSEEDEDEEEDYDDDEEEDKEKDGAEDGQVEEEPLNSEDDVSDEEGQELFDTENVVVCQYDKIHRSKNKWKFHLKDGIMNLNGRDYIFSKAIGDAEW</sequence>
<keyword id="KW-0007">Acetylation</keyword>
<keyword id="KW-0539">Nucleus</keyword>
<keyword id="KW-0597">Phosphoprotein</keyword>
<keyword id="KW-1185">Reference proteome</keyword>
<keyword id="KW-0804">Transcription</keyword>
<keyword id="KW-0805">Transcription regulation</keyword>